<comment type="function">
    <text>Insulin decreases blood glucose concentration. It increases cell permeability to monosaccharides, amino acids and fatty acids. It accelerates glycolysis, the pentose phosphate cycle, and glycogen synthesis in liver.</text>
</comment>
<comment type="subunit">
    <text>Heterodimer of a B chain and an A chain linked by two disulfide bonds.</text>
</comment>
<comment type="subcellular location">
    <subcellularLocation>
        <location>Secreted</location>
    </subcellularLocation>
</comment>
<comment type="similarity">
    <text evidence="1">Belongs to the insulin family.</text>
</comment>
<accession>P29335</accession>
<dbReference type="PIR" id="S15426">
    <property type="entry name" value="S15426"/>
</dbReference>
<dbReference type="SMR" id="P29335"/>
<dbReference type="GO" id="GO:0005615">
    <property type="term" value="C:extracellular space"/>
    <property type="evidence" value="ECO:0007669"/>
    <property type="project" value="TreeGrafter"/>
</dbReference>
<dbReference type="GO" id="GO:0005179">
    <property type="term" value="F:hormone activity"/>
    <property type="evidence" value="ECO:0007669"/>
    <property type="project" value="UniProtKB-KW"/>
</dbReference>
<dbReference type="GO" id="GO:0006006">
    <property type="term" value="P:glucose metabolic process"/>
    <property type="evidence" value="ECO:0007669"/>
    <property type="project" value="UniProtKB-KW"/>
</dbReference>
<dbReference type="CDD" id="cd04367">
    <property type="entry name" value="IlGF_insulin_like"/>
    <property type="match status" value="1"/>
</dbReference>
<dbReference type="Gene3D" id="1.10.100.10">
    <property type="entry name" value="Insulin-like"/>
    <property type="match status" value="1"/>
</dbReference>
<dbReference type="InterPro" id="IPR004825">
    <property type="entry name" value="Insulin"/>
</dbReference>
<dbReference type="InterPro" id="IPR016179">
    <property type="entry name" value="Insulin-like"/>
</dbReference>
<dbReference type="InterPro" id="IPR036438">
    <property type="entry name" value="Insulin-like_sf"/>
</dbReference>
<dbReference type="InterPro" id="IPR022353">
    <property type="entry name" value="Insulin_CS"/>
</dbReference>
<dbReference type="InterPro" id="IPR022352">
    <property type="entry name" value="Insulin_family"/>
</dbReference>
<dbReference type="PANTHER" id="PTHR11454:SF9">
    <property type="entry name" value="INSULIN"/>
    <property type="match status" value="1"/>
</dbReference>
<dbReference type="PANTHER" id="PTHR11454">
    <property type="entry name" value="INSULIN/INSULIN GROWTH FACTOR"/>
    <property type="match status" value="1"/>
</dbReference>
<dbReference type="Pfam" id="PF00049">
    <property type="entry name" value="Insulin"/>
    <property type="match status" value="2"/>
</dbReference>
<dbReference type="PRINTS" id="PR00277">
    <property type="entry name" value="INSULIN"/>
</dbReference>
<dbReference type="PRINTS" id="PR00276">
    <property type="entry name" value="INSULINFAMLY"/>
</dbReference>
<dbReference type="SMART" id="SM00078">
    <property type="entry name" value="IlGF"/>
    <property type="match status" value="1"/>
</dbReference>
<dbReference type="SUPFAM" id="SSF56994">
    <property type="entry name" value="Insulin-like"/>
    <property type="match status" value="1"/>
</dbReference>
<dbReference type="PROSITE" id="PS00262">
    <property type="entry name" value="INSULIN"/>
    <property type="match status" value="1"/>
</dbReference>
<keyword id="KW-0119">Carbohydrate metabolism</keyword>
<keyword id="KW-0903">Direct protein sequencing</keyword>
<keyword id="KW-1015">Disulfide bond</keyword>
<keyword id="KW-0313">Glucose metabolism</keyword>
<keyword id="KW-0372">Hormone</keyword>
<keyword id="KW-0964">Secreted</keyword>
<protein>
    <recommendedName>
        <fullName>Insulin</fullName>
    </recommendedName>
    <component>
        <recommendedName>
            <fullName>Insulin B chain</fullName>
        </recommendedName>
    </component>
    <component>
        <recommendedName>
            <fullName>Insulin A chain</fullName>
        </recommendedName>
    </component>
</protein>
<name>INS_AMICA</name>
<sequence length="52" mass="5777">AASQHLCGSHLVEALFLVCGESGFFYNPNKSGIVEQCCLKPCTIYEMEKYCN</sequence>
<feature type="peptide" id="PRO_0000015744" description="Insulin B chain">
    <location>
        <begin position="1"/>
        <end position="31"/>
    </location>
</feature>
<feature type="peptide" id="PRO_0000015745" description="Insulin A chain">
    <location>
        <begin position="32"/>
        <end position="52"/>
    </location>
</feature>
<feature type="disulfide bond" description="Interchain (between B and A chains)">
    <location>
        <begin position="7"/>
        <end position="38"/>
    </location>
</feature>
<feature type="disulfide bond" description="Interchain (between B and A chains)">
    <location>
        <begin position="19"/>
        <end position="51"/>
    </location>
</feature>
<feature type="disulfide bond">
    <location>
        <begin position="37"/>
        <end position="42"/>
    </location>
</feature>
<feature type="non-consecutive residues" evidence="1">
    <location>
        <begin position="31"/>
        <end position="32"/>
    </location>
</feature>
<gene>
    <name type="primary">ins</name>
</gene>
<proteinExistence type="evidence at protein level"/>
<reference key="1">
    <citation type="journal article" date="1991" name="Biochem. J.">
        <title>Structure and receptor-binding activity of insulin from a holostean fish, the bowfin (Amia calva).</title>
        <authorList>
            <person name="Conlon J.M."/>
            <person name="Youson J.H."/>
            <person name="Whittaker J."/>
        </authorList>
    </citation>
    <scope>PROTEIN SEQUENCE</scope>
</reference>
<organism>
    <name type="scientific">Amia calva</name>
    <name type="common">Bowfin</name>
    <dbReference type="NCBI Taxonomy" id="7924"/>
    <lineage>
        <taxon>Eukaryota</taxon>
        <taxon>Metazoa</taxon>
        <taxon>Chordata</taxon>
        <taxon>Craniata</taxon>
        <taxon>Vertebrata</taxon>
        <taxon>Euteleostomi</taxon>
        <taxon>Actinopterygii</taxon>
        <taxon>Neopterygii</taxon>
        <taxon>Holostei</taxon>
        <taxon>Amiiformes</taxon>
        <taxon>Amiidae</taxon>
        <taxon>Amia</taxon>
    </lineage>
</organism>
<evidence type="ECO:0000305" key="1"/>